<reference key="1">
    <citation type="journal article" date="2004" name="Nucleic Acids Res.">
        <title>Whole genome comparisons of serotype 4b and 1/2a strains of the food-borne pathogen Listeria monocytogenes reveal new insights into the core genome components of this species.</title>
        <authorList>
            <person name="Nelson K.E."/>
            <person name="Fouts D.E."/>
            <person name="Mongodin E.F."/>
            <person name="Ravel J."/>
            <person name="DeBoy R.T."/>
            <person name="Kolonay J.F."/>
            <person name="Rasko D.A."/>
            <person name="Angiuoli S.V."/>
            <person name="Gill S.R."/>
            <person name="Paulsen I.T."/>
            <person name="Peterson J.D."/>
            <person name="White O."/>
            <person name="Nelson W.C."/>
            <person name="Nierman W.C."/>
            <person name="Beanan M.J."/>
            <person name="Brinkac L.M."/>
            <person name="Daugherty S.C."/>
            <person name="Dodson R.J."/>
            <person name="Durkin A.S."/>
            <person name="Madupu R."/>
            <person name="Haft D.H."/>
            <person name="Selengut J."/>
            <person name="Van Aken S.E."/>
            <person name="Khouri H.M."/>
            <person name="Fedorova N."/>
            <person name="Forberger H.A."/>
            <person name="Tran B."/>
            <person name="Kathariou S."/>
            <person name="Wonderling L.D."/>
            <person name="Uhlich G.A."/>
            <person name="Bayles D.O."/>
            <person name="Luchansky J.B."/>
            <person name="Fraser C.M."/>
        </authorList>
    </citation>
    <scope>NUCLEOTIDE SEQUENCE [LARGE SCALE GENOMIC DNA]</scope>
    <source>
        <strain>F2365</strain>
    </source>
</reference>
<feature type="chain" id="PRO_0000148365" description="Dihydroorotate dehydrogenase B (NAD(+)), electron transfer subunit">
    <location>
        <begin position="1"/>
        <end position="254"/>
    </location>
</feature>
<feature type="domain" description="FAD-binding FR-type" evidence="1">
    <location>
        <begin position="1"/>
        <end position="99"/>
    </location>
</feature>
<feature type="binding site" evidence="1">
    <location>
        <begin position="50"/>
        <end position="53"/>
    </location>
    <ligand>
        <name>FAD</name>
        <dbReference type="ChEBI" id="CHEBI:57692"/>
    </ligand>
</feature>
<feature type="binding site" evidence="1">
    <location>
        <begin position="67"/>
        <end position="69"/>
    </location>
    <ligand>
        <name>FAD</name>
        <dbReference type="ChEBI" id="CHEBI:57692"/>
    </ligand>
</feature>
<feature type="binding site" evidence="1">
    <location>
        <begin position="74"/>
        <end position="75"/>
    </location>
    <ligand>
        <name>FAD</name>
        <dbReference type="ChEBI" id="CHEBI:57692"/>
    </ligand>
</feature>
<feature type="binding site" evidence="1">
    <location>
        <position position="218"/>
    </location>
    <ligand>
        <name>[2Fe-2S] cluster</name>
        <dbReference type="ChEBI" id="CHEBI:190135"/>
    </ligand>
</feature>
<feature type="binding site" evidence="1">
    <location>
        <position position="223"/>
    </location>
    <ligand>
        <name>[2Fe-2S] cluster</name>
        <dbReference type="ChEBI" id="CHEBI:190135"/>
    </ligand>
</feature>
<feature type="binding site" evidence="1">
    <location>
        <position position="226"/>
    </location>
    <ligand>
        <name>[2Fe-2S] cluster</name>
        <dbReference type="ChEBI" id="CHEBI:190135"/>
    </ligand>
</feature>
<feature type="binding site" evidence="1">
    <location>
        <position position="241"/>
    </location>
    <ligand>
        <name>[2Fe-2S] cluster</name>
        <dbReference type="ChEBI" id="CHEBI:190135"/>
    </ligand>
</feature>
<comment type="function">
    <text evidence="1">Responsible for channeling the electrons from the oxidation of dihydroorotate from the FMN redox center in the PyrD type B subunit to the ultimate electron acceptor NAD(+).</text>
</comment>
<comment type="cofactor">
    <cofactor evidence="1">
        <name>[2Fe-2S] cluster</name>
        <dbReference type="ChEBI" id="CHEBI:190135"/>
    </cofactor>
    <text evidence="1">Binds 1 [2Fe-2S] cluster per subunit.</text>
</comment>
<comment type="cofactor">
    <cofactor evidence="1">
        <name>FAD</name>
        <dbReference type="ChEBI" id="CHEBI:57692"/>
    </cofactor>
    <text evidence="1">Binds 1 FAD per subunit.</text>
</comment>
<comment type="pathway">
    <text evidence="1">Pyrimidine metabolism; UMP biosynthesis via de novo pathway; orotate from (S)-dihydroorotate (NAD(+) route): step 1/1.</text>
</comment>
<comment type="subunit">
    <text evidence="1">Heterotetramer of 2 PyrK and 2 PyrD type B subunits.</text>
</comment>
<comment type="similarity">
    <text evidence="1">Belongs to the PyrK family.</text>
</comment>
<comment type="sequence caution" evidence="2">
    <conflict type="erroneous initiation">
        <sequence resource="EMBL-CDS" id="AAT04632"/>
    </conflict>
</comment>
<evidence type="ECO:0000255" key="1">
    <source>
        <dbReference type="HAMAP-Rule" id="MF_01211"/>
    </source>
</evidence>
<evidence type="ECO:0000305" key="2"/>
<sequence length="254" mass="27589">MLQTEMKVIQQTEIADKVYELILTGECVADMSPGQFLMLKPSRSDLLMRRPISICSYDKTAKTCILLYRIEGDGTRDFSKLSEGDTIDVLGPLGKGFDIDQTPAPKTALLIGGGIGVPPMYQLGKELAGKGVQVTFVNGFQSAKDSFYEKEMNAYGTVHIATVDGSLGTQGFVTDITNNFPEEPDVIYSCGPKAMLQAVKASFPETKTYLSLEERMACGIGACYACVCPKADDAKKQFKVCEDGPVFRADEVSL</sequence>
<protein>
    <recommendedName>
        <fullName evidence="1">Dihydroorotate dehydrogenase B (NAD(+)), electron transfer subunit</fullName>
    </recommendedName>
    <alternativeName>
        <fullName evidence="1">Dihydroorotate oxidase B, electron transfer subunit</fullName>
    </alternativeName>
</protein>
<dbReference type="EMBL" id="AE017262">
    <property type="protein sequence ID" value="AAT04632.1"/>
    <property type="status" value="ALT_INIT"/>
    <property type="molecule type" value="Genomic_DNA"/>
</dbReference>
<dbReference type="SMR" id="Q71YI2"/>
<dbReference type="KEGG" id="lmf:LMOf2365_1862"/>
<dbReference type="HOGENOM" id="CLU_003827_1_2_9"/>
<dbReference type="UniPathway" id="UPA00070">
    <property type="reaction ID" value="UER00945"/>
</dbReference>
<dbReference type="GO" id="GO:0051537">
    <property type="term" value="F:2 iron, 2 sulfur cluster binding"/>
    <property type="evidence" value="ECO:0007669"/>
    <property type="project" value="UniProtKB-KW"/>
</dbReference>
<dbReference type="GO" id="GO:0009055">
    <property type="term" value="F:electron transfer activity"/>
    <property type="evidence" value="ECO:0007669"/>
    <property type="project" value="UniProtKB-UniRule"/>
</dbReference>
<dbReference type="GO" id="GO:0050660">
    <property type="term" value="F:flavin adenine dinucleotide binding"/>
    <property type="evidence" value="ECO:0007669"/>
    <property type="project" value="InterPro"/>
</dbReference>
<dbReference type="GO" id="GO:0046872">
    <property type="term" value="F:metal ion binding"/>
    <property type="evidence" value="ECO:0007669"/>
    <property type="project" value="UniProtKB-KW"/>
</dbReference>
<dbReference type="GO" id="GO:0016491">
    <property type="term" value="F:oxidoreductase activity"/>
    <property type="evidence" value="ECO:0007669"/>
    <property type="project" value="InterPro"/>
</dbReference>
<dbReference type="GO" id="GO:0044205">
    <property type="term" value="P:'de novo' UMP biosynthetic process"/>
    <property type="evidence" value="ECO:0007669"/>
    <property type="project" value="UniProtKB-UniRule"/>
</dbReference>
<dbReference type="CDD" id="cd06218">
    <property type="entry name" value="DHOD_e_trans"/>
    <property type="match status" value="1"/>
</dbReference>
<dbReference type="FunFam" id="2.10.240.10:FF:000001">
    <property type="entry name" value="Dihydroorotate dehydrogenase B (NAD(+)), electron transfer subunit"/>
    <property type="match status" value="1"/>
</dbReference>
<dbReference type="FunFam" id="2.40.30.10:FF:000045">
    <property type="entry name" value="Dihydroorotate dehydrogenase B (NAD(+)), electron transfer subunit"/>
    <property type="match status" value="1"/>
</dbReference>
<dbReference type="FunFam" id="3.40.50.80:FF:000017">
    <property type="entry name" value="Dihydroorotate dehydrogenase B (NAD(+)), electron transfer subunit"/>
    <property type="match status" value="1"/>
</dbReference>
<dbReference type="Gene3D" id="2.10.240.10">
    <property type="entry name" value="Dihydroorotate dehydrogenase, electron transfer subunit"/>
    <property type="match status" value="1"/>
</dbReference>
<dbReference type="Gene3D" id="3.40.50.80">
    <property type="entry name" value="Nucleotide-binding domain of ferredoxin-NADP reductase (FNR) module"/>
    <property type="match status" value="1"/>
</dbReference>
<dbReference type="Gene3D" id="2.40.30.10">
    <property type="entry name" value="Translation factors"/>
    <property type="match status" value="1"/>
</dbReference>
<dbReference type="HAMAP" id="MF_01211">
    <property type="entry name" value="DHODB_Fe_S_bind"/>
    <property type="match status" value="1"/>
</dbReference>
<dbReference type="InterPro" id="IPR012165">
    <property type="entry name" value="Cyt_c3_hydrogenase_gsu"/>
</dbReference>
<dbReference type="InterPro" id="IPR037117">
    <property type="entry name" value="Dihydroorotate_DH_ele_sf"/>
</dbReference>
<dbReference type="InterPro" id="IPR019480">
    <property type="entry name" value="Dihydroorotate_DH_Fe-S-bd"/>
</dbReference>
<dbReference type="InterPro" id="IPR023455">
    <property type="entry name" value="Dihydroorotate_DHASE_ETsu"/>
</dbReference>
<dbReference type="InterPro" id="IPR017927">
    <property type="entry name" value="FAD-bd_FR_type"/>
</dbReference>
<dbReference type="InterPro" id="IPR039261">
    <property type="entry name" value="FNR_nucleotide-bd"/>
</dbReference>
<dbReference type="InterPro" id="IPR001433">
    <property type="entry name" value="OxRdtase_FAD/NAD-bd"/>
</dbReference>
<dbReference type="InterPro" id="IPR050353">
    <property type="entry name" value="PyrK_electron_transfer"/>
</dbReference>
<dbReference type="InterPro" id="IPR017938">
    <property type="entry name" value="Riboflavin_synthase-like_b-brl"/>
</dbReference>
<dbReference type="NCBIfam" id="NF000797">
    <property type="entry name" value="PRK00054.1-2"/>
    <property type="match status" value="1"/>
</dbReference>
<dbReference type="NCBIfam" id="NF000799">
    <property type="entry name" value="PRK00054.1-4"/>
    <property type="match status" value="1"/>
</dbReference>
<dbReference type="PANTHER" id="PTHR43513">
    <property type="entry name" value="DIHYDROOROTATE DEHYDROGENASE B (NAD(+)), ELECTRON TRANSFER SUBUNIT"/>
    <property type="match status" value="1"/>
</dbReference>
<dbReference type="PANTHER" id="PTHR43513:SF3">
    <property type="entry name" value="DIHYDROOROTATE DEHYDROGENASE B (NAD(+)), ELECTRON TRANSFER SUBUNIT-RELATED"/>
    <property type="match status" value="1"/>
</dbReference>
<dbReference type="Pfam" id="PF10418">
    <property type="entry name" value="DHODB_Fe-S_bind"/>
    <property type="match status" value="1"/>
</dbReference>
<dbReference type="Pfam" id="PF00175">
    <property type="entry name" value="NAD_binding_1"/>
    <property type="match status" value="1"/>
</dbReference>
<dbReference type="PIRSF" id="PIRSF006816">
    <property type="entry name" value="Cyc3_hyd_g"/>
    <property type="match status" value="1"/>
</dbReference>
<dbReference type="PRINTS" id="PR00409">
    <property type="entry name" value="PHDIOXRDTASE"/>
</dbReference>
<dbReference type="SUPFAM" id="SSF52343">
    <property type="entry name" value="Ferredoxin reductase-like, C-terminal NADP-linked domain"/>
    <property type="match status" value="1"/>
</dbReference>
<dbReference type="SUPFAM" id="SSF63380">
    <property type="entry name" value="Riboflavin synthase domain-like"/>
    <property type="match status" value="1"/>
</dbReference>
<dbReference type="PROSITE" id="PS51384">
    <property type="entry name" value="FAD_FR"/>
    <property type="match status" value="1"/>
</dbReference>
<name>PYRK_LISMF</name>
<proteinExistence type="inferred from homology"/>
<keyword id="KW-0001">2Fe-2S</keyword>
<keyword id="KW-0249">Electron transport</keyword>
<keyword id="KW-0274">FAD</keyword>
<keyword id="KW-0285">Flavoprotein</keyword>
<keyword id="KW-0408">Iron</keyword>
<keyword id="KW-0411">Iron-sulfur</keyword>
<keyword id="KW-0479">Metal-binding</keyword>
<keyword id="KW-0665">Pyrimidine biosynthesis</keyword>
<keyword id="KW-0813">Transport</keyword>
<accession>Q71YI2</accession>
<organism>
    <name type="scientific">Listeria monocytogenes serotype 4b (strain F2365)</name>
    <dbReference type="NCBI Taxonomy" id="265669"/>
    <lineage>
        <taxon>Bacteria</taxon>
        <taxon>Bacillati</taxon>
        <taxon>Bacillota</taxon>
        <taxon>Bacilli</taxon>
        <taxon>Bacillales</taxon>
        <taxon>Listeriaceae</taxon>
        <taxon>Listeria</taxon>
    </lineage>
</organism>
<gene>
    <name evidence="1" type="primary">pyrK</name>
    <name type="ordered locus">LMOf2365_1862</name>
</gene>